<feature type="chain" id="PRO_0000258459" description="Large ribosomal subunit protein bL9">
    <location>
        <begin position="1"/>
        <end position="151"/>
    </location>
</feature>
<sequence length="151" mass="16087">MQVILKEKVENLGVLGDIVNVKPGYARNFLIPFGKAVQATQANIKAFEAQKAELEKAEKARFEAAVAVADAIKDKVYTIAAQAGEGGKLFGSVGIAEVAEAVSNQSGKKIEKSQVRMPEGVIRSIGEFELTVHVYTDVDADIKVNVVAAEA</sequence>
<gene>
    <name evidence="1" type="primary">rplI</name>
    <name type="ordered locus">FTL_1026</name>
</gene>
<evidence type="ECO:0000255" key="1">
    <source>
        <dbReference type="HAMAP-Rule" id="MF_00503"/>
    </source>
</evidence>
<evidence type="ECO:0000305" key="2"/>
<name>RL9_FRATH</name>
<reference key="1">
    <citation type="submission" date="2006-03" db="EMBL/GenBank/DDBJ databases">
        <title>Complete genome sequence of Francisella tularensis LVS (Live Vaccine Strain).</title>
        <authorList>
            <person name="Chain P."/>
            <person name="Larimer F."/>
            <person name="Land M."/>
            <person name="Stilwagen S."/>
            <person name="Larsson P."/>
            <person name="Bearden S."/>
            <person name="Chu M."/>
            <person name="Oyston P."/>
            <person name="Forsman M."/>
            <person name="Andersson S."/>
            <person name="Lindler L."/>
            <person name="Titball R."/>
            <person name="Garcia E."/>
        </authorList>
    </citation>
    <scope>NUCLEOTIDE SEQUENCE [LARGE SCALE GENOMIC DNA]</scope>
    <source>
        <strain>LVS</strain>
    </source>
</reference>
<organism>
    <name type="scientific">Francisella tularensis subsp. holarctica (strain LVS)</name>
    <dbReference type="NCBI Taxonomy" id="376619"/>
    <lineage>
        <taxon>Bacteria</taxon>
        <taxon>Pseudomonadati</taxon>
        <taxon>Pseudomonadota</taxon>
        <taxon>Gammaproteobacteria</taxon>
        <taxon>Thiotrichales</taxon>
        <taxon>Francisellaceae</taxon>
        <taxon>Francisella</taxon>
    </lineage>
</organism>
<keyword id="KW-1185">Reference proteome</keyword>
<keyword id="KW-0687">Ribonucleoprotein</keyword>
<keyword id="KW-0689">Ribosomal protein</keyword>
<keyword id="KW-0694">RNA-binding</keyword>
<keyword id="KW-0699">rRNA-binding</keyword>
<comment type="function">
    <text evidence="1">Binds to the 23S rRNA.</text>
</comment>
<comment type="similarity">
    <text evidence="1">Belongs to the bacterial ribosomal protein bL9 family.</text>
</comment>
<proteinExistence type="inferred from homology"/>
<accession>Q2A3H5</accession>
<protein>
    <recommendedName>
        <fullName evidence="1">Large ribosomal subunit protein bL9</fullName>
    </recommendedName>
    <alternativeName>
        <fullName evidence="2">50S ribosomal protein L9</fullName>
    </alternativeName>
</protein>
<dbReference type="EMBL" id="AM233362">
    <property type="protein sequence ID" value="CAJ79465.1"/>
    <property type="molecule type" value="Genomic_DNA"/>
</dbReference>
<dbReference type="RefSeq" id="WP_010031819.1">
    <property type="nucleotide sequence ID" value="NZ_CP009694.1"/>
</dbReference>
<dbReference type="SMR" id="Q2A3H5"/>
<dbReference type="KEGG" id="ftl:FTL_1026"/>
<dbReference type="Proteomes" id="UP000001944">
    <property type="component" value="Chromosome"/>
</dbReference>
<dbReference type="GO" id="GO:1990904">
    <property type="term" value="C:ribonucleoprotein complex"/>
    <property type="evidence" value="ECO:0007669"/>
    <property type="project" value="UniProtKB-KW"/>
</dbReference>
<dbReference type="GO" id="GO:0005840">
    <property type="term" value="C:ribosome"/>
    <property type="evidence" value="ECO:0007669"/>
    <property type="project" value="UniProtKB-KW"/>
</dbReference>
<dbReference type="GO" id="GO:0019843">
    <property type="term" value="F:rRNA binding"/>
    <property type="evidence" value="ECO:0007669"/>
    <property type="project" value="UniProtKB-UniRule"/>
</dbReference>
<dbReference type="GO" id="GO:0003735">
    <property type="term" value="F:structural constituent of ribosome"/>
    <property type="evidence" value="ECO:0007669"/>
    <property type="project" value="InterPro"/>
</dbReference>
<dbReference type="GO" id="GO:0006412">
    <property type="term" value="P:translation"/>
    <property type="evidence" value="ECO:0007669"/>
    <property type="project" value="UniProtKB-UniRule"/>
</dbReference>
<dbReference type="Gene3D" id="3.10.430.100">
    <property type="entry name" value="Ribosomal protein L9, C-terminal domain"/>
    <property type="match status" value="1"/>
</dbReference>
<dbReference type="Gene3D" id="3.40.5.10">
    <property type="entry name" value="Ribosomal protein L9, N-terminal domain"/>
    <property type="match status" value="1"/>
</dbReference>
<dbReference type="HAMAP" id="MF_00503">
    <property type="entry name" value="Ribosomal_bL9"/>
    <property type="match status" value="1"/>
</dbReference>
<dbReference type="InterPro" id="IPR000244">
    <property type="entry name" value="Ribosomal_bL9"/>
</dbReference>
<dbReference type="InterPro" id="IPR009027">
    <property type="entry name" value="Ribosomal_bL9/RNase_H1_N"/>
</dbReference>
<dbReference type="InterPro" id="IPR020594">
    <property type="entry name" value="Ribosomal_bL9_bac/chp"/>
</dbReference>
<dbReference type="InterPro" id="IPR020069">
    <property type="entry name" value="Ribosomal_bL9_C"/>
</dbReference>
<dbReference type="InterPro" id="IPR036791">
    <property type="entry name" value="Ribosomal_bL9_C_sf"/>
</dbReference>
<dbReference type="InterPro" id="IPR020070">
    <property type="entry name" value="Ribosomal_bL9_N"/>
</dbReference>
<dbReference type="InterPro" id="IPR036935">
    <property type="entry name" value="Ribosomal_bL9_N_sf"/>
</dbReference>
<dbReference type="NCBIfam" id="TIGR00158">
    <property type="entry name" value="L9"/>
    <property type="match status" value="1"/>
</dbReference>
<dbReference type="PANTHER" id="PTHR21368">
    <property type="entry name" value="50S RIBOSOMAL PROTEIN L9"/>
    <property type="match status" value="1"/>
</dbReference>
<dbReference type="Pfam" id="PF03948">
    <property type="entry name" value="Ribosomal_L9_C"/>
    <property type="match status" value="1"/>
</dbReference>
<dbReference type="Pfam" id="PF01281">
    <property type="entry name" value="Ribosomal_L9_N"/>
    <property type="match status" value="1"/>
</dbReference>
<dbReference type="SUPFAM" id="SSF55658">
    <property type="entry name" value="L9 N-domain-like"/>
    <property type="match status" value="1"/>
</dbReference>
<dbReference type="SUPFAM" id="SSF55653">
    <property type="entry name" value="Ribosomal protein L9 C-domain"/>
    <property type="match status" value="1"/>
</dbReference>
<dbReference type="PROSITE" id="PS00651">
    <property type="entry name" value="RIBOSOMAL_L9"/>
    <property type="match status" value="1"/>
</dbReference>